<reference key="1">
    <citation type="journal article" date="1995" name="Eur. J. Biochem.">
        <title>Amino acid sequence and disulphide-bridge pattern of three gamma-thionins from Sorghum bicolor.</title>
        <authorList>
            <person name="Nitti G."/>
            <person name="Orru S."/>
            <person name="Bloch C. Jr."/>
            <person name="Morhy L."/>
            <person name="Marino G."/>
            <person name="Pucci P."/>
        </authorList>
    </citation>
    <scope>PROTEIN SEQUENCE</scope>
    <source>
        <tissue>Seed</tissue>
    </source>
</reference>
<accession>Q09198</accession>
<evidence type="ECO:0000269" key="1">
    <source>
    </source>
</evidence>
<evidence type="ECO:0000305" key="2"/>
<evidence type="ECO:0000305" key="3">
    <source>
    </source>
</evidence>
<feature type="chain" id="PRO_0000074247" description="Defensin-like protein 21">
    <location>
        <begin position="1"/>
        <end position="47"/>
    </location>
</feature>
<feature type="disulfide bond" evidence="1">
    <location>
        <begin position="3"/>
        <end position="47"/>
    </location>
</feature>
<feature type="disulfide bond" evidence="1">
    <location>
        <begin position="14"/>
        <end position="34"/>
    </location>
</feature>
<feature type="disulfide bond" evidence="1">
    <location>
        <begin position="20"/>
        <end position="41"/>
    </location>
</feature>
<feature type="disulfide bond" evidence="1">
    <location>
        <begin position="24"/>
        <end position="43"/>
    </location>
</feature>
<comment type="similarity">
    <text evidence="2">Belongs to the DEFL family. Protease inhibitor I18 (RTI/MTI-2) subfamily.</text>
</comment>
<comment type="caution">
    <text evidence="3">Was initially thought to be a protease inhibitor.</text>
</comment>
<keyword id="KW-0929">Antimicrobial</keyword>
<keyword id="KW-0903">Direct protein sequencing</keyword>
<keyword id="KW-1015">Disulfide bond</keyword>
<keyword id="KW-0295">Fungicide</keyword>
<keyword id="KW-0611">Plant defense</keyword>
<sequence>RVCRRRSAGFKGLCMSDHNCAQVCLQEGWGGGNCDGVMRQCKCIRQC</sequence>
<protein>
    <recommendedName>
        <fullName>Defensin-like protein 21</fullName>
    </recommendedName>
    <alternativeName>
        <fullName>Small protein inhibitor of insect alpha-amylases 2.1</fullName>
        <shortName>SI alpha-2.1</shortName>
    </alternativeName>
</protein>
<proteinExistence type="evidence at protein level"/>
<dbReference type="PIR" id="S69144">
    <property type="entry name" value="S69144"/>
</dbReference>
<dbReference type="SMR" id="Q09198"/>
<dbReference type="ExpressionAtlas" id="Q09198">
    <property type="expression patterns" value="baseline"/>
</dbReference>
<dbReference type="GO" id="GO:0050832">
    <property type="term" value="P:defense response to fungus"/>
    <property type="evidence" value="ECO:0007669"/>
    <property type="project" value="UniProtKB-KW"/>
</dbReference>
<dbReference type="GO" id="GO:0031640">
    <property type="term" value="P:killing of cells of another organism"/>
    <property type="evidence" value="ECO:0007669"/>
    <property type="project" value="UniProtKB-KW"/>
</dbReference>
<dbReference type="CDD" id="cd00107">
    <property type="entry name" value="Knot1"/>
    <property type="match status" value="1"/>
</dbReference>
<dbReference type="Gene3D" id="3.30.30.10">
    <property type="entry name" value="Knottin, scorpion toxin-like"/>
    <property type="match status" value="1"/>
</dbReference>
<dbReference type="InterPro" id="IPR008176">
    <property type="entry name" value="Defensin_plant"/>
</dbReference>
<dbReference type="InterPro" id="IPR003614">
    <property type="entry name" value="Scorpion_toxin-like"/>
</dbReference>
<dbReference type="InterPro" id="IPR036574">
    <property type="entry name" value="Scorpion_toxin-like_sf"/>
</dbReference>
<dbReference type="Pfam" id="PF00304">
    <property type="entry name" value="Gamma-thionin"/>
    <property type="match status" value="1"/>
</dbReference>
<dbReference type="PRINTS" id="PR00288">
    <property type="entry name" value="PUROTHIONIN"/>
</dbReference>
<dbReference type="SMART" id="SM00505">
    <property type="entry name" value="Knot1"/>
    <property type="match status" value="1"/>
</dbReference>
<dbReference type="SUPFAM" id="SSF57095">
    <property type="entry name" value="Scorpion toxin-like"/>
    <property type="match status" value="1"/>
</dbReference>
<dbReference type="PROSITE" id="PS00940">
    <property type="entry name" value="GAMMA_THIONIN"/>
    <property type="match status" value="1"/>
</dbReference>
<organism>
    <name type="scientific">Sorghum bicolor</name>
    <name type="common">Sorghum</name>
    <name type="synonym">Sorghum vulgare</name>
    <dbReference type="NCBI Taxonomy" id="4558"/>
    <lineage>
        <taxon>Eukaryota</taxon>
        <taxon>Viridiplantae</taxon>
        <taxon>Streptophyta</taxon>
        <taxon>Embryophyta</taxon>
        <taxon>Tracheophyta</taxon>
        <taxon>Spermatophyta</taxon>
        <taxon>Magnoliopsida</taxon>
        <taxon>Liliopsida</taxon>
        <taxon>Poales</taxon>
        <taxon>Poaceae</taxon>
        <taxon>PACMAD clade</taxon>
        <taxon>Panicoideae</taxon>
        <taxon>Andropogonodae</taxon>
        <taxon>Andropogoneae</taxon>
        <taxon>Sorghinae</taxon>
        <taxon>Sorghum</taxon>
    </lineage>
</organism>
<name>DEF21_SORBI</name>